<name>RN2A_LITCL</name>
<organism>
    <name type="scientific">Lithobates clamitans</name>
    <name type="common">Green frog</name>
    <name type="synonym">Rana clamitans</name>
    <dbReference type="NCBI Taxonomy" id="145282"/>
    <lineage>
        <taxon>Eukaryota</taxon>
        <taxon>Metazoa</taxon>
        <taxon>Chordata</taxon>
        <taxon>Craniata</taxon>
        <taxon>Vertebrata</taxon>
        <taxon>Euteleostomi</taxon>
        <taxon>Amphibia</taxon>
        <taxon>Batrachia</taxon>
        <taxon>Anura</taxon>
        <taxon>Neobatrachia</taxon>
        <taxon>Ranoidea</taxon>
        <taxon>Ranidae</taxon>
        <taxon>Lithobates</taxon>
    </lineage>
</organism>
<dbReference type="SMR" id="P82878"/>
<dbReference type="GO" id="GO:0005576">
    <property type="term" value="C:extracellular region"/>
    <property type="evidence" value="ECO:0007669"/>
    <property type="project" value="UniProtKB-SubCell"/>
</dbReference>
<dbReference type="GO" id="GO:0050832">
    <property type="term" value="P:defense response to fungus"/>
    <property type="evidence" value="ECO:0007669"/>
    <property type="project" value="UniProtKB-KW"/>
</dbReference>
<dbReference type="GO" id="GO:0050829">
    <property type="term" value="P:defense response to Gram-negative bacterium"/>
    <property type="evidence" value="ECO:0007669"/>
    <property type="project" value="UniProtKB-ARBA"/>
</dbReference>
<dbReference type="GO" id="GO:0031640">
    <property type="term" value="P:killing of cells of another organism"/>
    <property type="evidence" value="ECO:0007669"/>
    <property type="project" value="UniProtKB-KW"/>
</dbReference>
<dbReference type="InterPro" id="IPR012521">
    <property type="entry name" value="Antimicrobial_frog_2"/>
</dbReference>
<dbReference type="Pfam" id="PF08023">
    <property type="entry name" value="Antimicrobial_2"/>
    <property type="match status" value="1"/>
</dbReference>
<feature type="peptide" id="PRO_0000044658" description="Ranatuerin-2Ca" evidence="2">
    <location>
        <begin position="1"/>
        <end position="31"/>
    </location>
</feature>
<feature type="disulfide bond" evidence="2">
    <location>
        <begin position="24"/>
        <end position="29"/>
    </location>
</feature>
<comment type="function">
    <text evidence="1">Antibacterial activity against Gram-positive bacterium S.aureus and Gram-negative bacterium E.coli. Has activity against C.albicans.</text>
</comment>
<comment type="subcellular location">
    <subcellularLocation>
        <location evidence="2">Secreted</location>
    </subcellularLocation>
</comment>
<comment type="tissue specificity">
    <text evidence="5">Expressed by the skin glands.</text>
</comment>
<comment type="mass spectrometry" mass="3156.4" error="0.02" method="Electrospray" evidence="2"/>
<comment type="similarity">
    <text evidence="4">Belongs to the frog skin active peptide (FSAP) family. Ranatuerin subfamily.</text>
</comment>
<reference key="1">
    <citation type="journal article" date="2000" name="Peptides">
        <title>Purification and characterization of antimicrobial peptides from the skin of the North American green frog Rana clamitans.</title>
        <authorList>
            <person name="Halverson T."/>
            <person name="Basir Y.J."/>
            <person name="Knoop F.C."/>
            <person name="Conlon J.M."/>
        </authorList>
    </citation>
    <scope>PROTEIN SEQUENCE</scope>
    <scope>MASS SPECTROMETRY</scope>
    <scope>SUBCELLULAR LOCATION</scope>
    <source>
        <tissue>Skin secretion</tissue>
    </source>
</reference>
<protein>
    <recommendedName>
        <fullName evidence="3">Ranatuerin-2Ca</fullName>
    </recommendedName>
</protein>
<accession>P82878</accession>
<evidence type="ECO:0000250" key="1">
    <source>
        <dbReference type="UniProtKB" id="P82879"/>
    </source>
</evidence>
<evidence type="ECO:0000269" key="2">
    <source>
    </source>
</evidence>
<evidence type="ECO:0000303" key="3">
    <source>
    </source>
</evidence>
<evidence type="ECO:0000305" key="4"/>
<evidence type="ECO:0000305" key="5">
    <source>
    </source>
</evidence>
<sequence length="31" mass="3159">GLFLDTLKGAAKDVAGKLLEGLKCKIAGCKP</sequence>
<proteinExistence type="evidence at protein level"/>
<keyword id="KW-0878">Amphibian defense peptide</keyword>
<keyword id="KW-0044">Antibiotic</keyword>
<keyword id="KW-0929">Antimicrobial</keyword>
<keyword id="KW-0903">Direct protein sequencing</keyword>
<keyword id="KW-1015">Disulfide bond</keyword>
<keyword id="KW-0295">Fungicide</keyword>
<keyword id="KW-0964">Secreted</keyword>